<reference key="1">
    <citation type="journal article" date="1996" name="Mol. Biol. Evol.">
        <title>Molecular divergence and phylogeny: rates and patterns of cytochrome b evolution in cranes.</title>
        <authorList>
            <person name="Krajewski C.W."/>
            <person name="King D.G."/>
        </authorList>
    </citation>
    <scope>NUCLEOTIDE SEQUENCE [GENOMIC DNA]</scope>
</reference>
<dbReference type="EMBL" id="U27547">
    <property type="protein sequence ID" value="AAA69796.1"/>
    <property type="molecule type" value="Genomic_DNA"/>
</dbReference>
<dbReference type="RefSeq" id="YP_007624421.1">
    <property type="nucleotide sequence ID" value="NC_020579.1"/>
</dbReference>
<dbReference type="SMR" id="Q34607"/>
<dbReference type="GeneID" id="14840944"/>
<dbReference type="CTD" id="4519"/>
<dbReference type="GO" id="GO:0005743">
    <property type="term" value="C:mitochondrial inner membrane"/>
    <property type="evidence" value="ECO:0007669"/>
    <property type="project" value="UniProtKB-SubCell"/>
</dbReference>
<dbReference type="GO" id="GO:0045275">
    <property type="term" value="C:respiratory chain complex III"/>
    <property type="evidence" value="ECO:0007669"/>
    <property type="project" value="InterPro"/>
</dbReference>
<dbReference type="GO" id="GO:0046872">
    <property type="term" value="F:metal ion binding"/>
    <property type="evidence" value="ECO:0007669"/>
    <property type="project" value="UniProtKB-KW"/>
</dbReference>
<dbReference type="GO" id="GO:0008121">
    <property type="term" value="F:ubiquinol-cytochrome-c reductase activity"/>
    <property type="evidence" value="ECO:0007669"/>
    <property type="project" value="InterPro"/>
</dbReference>
<dbReference type="GO" id="GO:0006122">
    <property type="term" value="P:mitochondrial electron transport, ubiquinol to cytochrome c"/>
    <property type="evidence" value="ECO:0007669"/>
    <property type="project" value="TreeGrafter"/>
</dbReference>
<dbReference type="CDD" id="cd00290">
    <property type="entry name" value="cytochrome_b_C"/>
    <property type="match status" value="1"/>
</dbReference>
<dbReference type="CDD" id="cd00284">
    <property type="entry name" value="Cytochrome_b_N"/>
    <property type="match status" value="1"/>
</dbReference>
<dbReference type="FunFam" id="1.20.810.10:FF:000002">
    <property type="entry name" value="Cytochrome b"/>
    <property type="match status" value="1"/>
</dbReference>
<dbReference type="Gene3D" id="1.20.810.10">
    <property type="entry name" value="Cytochrome Bc1 Complex, Chain C"/>
    <property type="match status" value="1"/>
</dbReference>
<dbReference type="InterPro" id="IPR005798">
    <property type="entry name" value="Cyt_b/b6_C"/>
</dbReference>
<dbReference type="InterPro" id="IPR036150">
    <property type="entry name" value="Cyt_b/b6_C_sf"/>
</dbReference>
<dbReference type="InterPro" id="IPR005797">
    <property type="entry name" value="Cyt_b/b6_N"/>
</dbReference>
<dbReference type="InterPro" id="IPR027387">
    <property type="entry name" value="Cytb/b6-like_sf"/>
</dbReference>
<dbReference type="InterPro" id="IPR030689">
    <property type="entry name" value="Cytochrome_b"/>
</dbReference>
<dbReference type="InterPro" id="IPR048260">
    <property type="entry name" value="Cytochrome_b_C_euk/bac"/>
</dbReference>
<dbReference type="InterPro" id="IPR048259">
    <property type="entry name" value="Cytochrome_b_N_euk/bac"/>
</dbReference>
<dbReference type="InterPro" id="IPR016174">
    <property type="entry name" value="Di-haem_cyt_TM"/>
</dbReference>
<dbReference type="PANTHER" id="PTHR19271">
    <property type="entry name" value="CYTOCHROME B"/>
    <property type="match status" value="1"/>
</dbReference>
<dbReference type="PANTHER" id="PTHR19271:SF16">
    <property type="entry name" value="CYTOCHROME B"/>
    <property type="match status" value="1"/>
</dbReference>
<dbReference type="Pfam" id="PF00032">
    <property type="entry name" value="Cytochrom_B_C"/>
    <property type="match status" value="1"/>
</dbReference>
<dbReference type="Pfam" id="PF00033">
    <property type="entry name" value="Cytochrome_B"/>
    <property type="match status" value="1"/>
</dbReference>
<dbReference type="PIRSF" id="PIRSF038885">
    <property type="entry name" value="COB"/>
    <property type="match status" value="1"/>
</dbReference>
<dbReference type="SUPFAM" id="SSF81648">
    <property type="entry name" value="a domain/subunit of cytochrome bc1 complex (Ubiquinol-cytochrome c reductase)"/>
    <property type="match status" value="1"/>
</dbReference>
<dbReference type="SUPFAM" id="SSF81342">
    <property type="entry name" value="Transmembrane di-heme cytochromes"/>
    <property type="match status" value="1"/>
</dbReference>
<dbReference type="PROSITE" id="PS51003">
    <property type="entry name" value="CYTB_CTER"/>
    <property type="match status" value="1"/>
</dbReference>
<dbReference type="PROSITE" id="PS51002">
    <property type="entry name" value="CYTB_NTER"/>
    <property type="match status" value="1"/>
</dbReference>
<accession>Q34607</accession>
<proteinExistence type="inferred from homology"/>
<gene>
    <name type="primary">MT-CYB</name>
    <name type="synonym">COB</name>
    <name type="synonym">CYTB</name>
    <name type="synonym">MTCYB</name>
</gene>
<comment type="function">
    <text evidence="2">Component of the ubiquinol-cytochrome c reductase complex (complex III or cytochrome b-c1 complex) that is part of the mitochondrial respiratory chain. The b-c1 complex mediates electron transfer from ubiquinol to cytochrome c. Contributes to the generation of a proton gradient across the mitochondrial membrane that is then used for ATP synthesis.</text>
</comment>
<comment type="cofactor">
    <cofactor evidence="2">
        <name>heme b</name>
        <dbReference type="ChEBI" id="CHEBI:60344"/>
    </cofactor>
    <text evidence="2">Binds 2 heme b groups non-covalently.</text>
</comment>
<comment type="subunit">
    <text evidence="2">The cytochrome bc1 complex contains 11 subunits: 3 respiratory subunits (MT-CYB, CYC1 and UQCRFS1), 2 core proteins (UQCRC1 and UQCRC2) and 6 low-molecular weight proteins (UQCRH/QCR6, UQCRB/QCR7, UQCRQ/QCR8, UQCR10/QCR9, UQCR11/QCR10 and a cleavage product of UQCRFS1). This cytochrome bc1 complex then forms a dimer.</text>
</comment>
<comment type="subcellular location">
    <subcellularLocation>
        <location evidence="2">Mitochondrion inner membrane</location>
        <topology evidence="2">Multi-pass membrane protein</topology>
    </subcellularLocation>
</comment>
<comment type="miscellaneous">
    <text evidence="1">Heme 1 (or BL or b562) is low-potential and absorbs at about 562 nm, and heme 2 (or BH or b566) is high-potential and absorbs at about 566 nm.</text>
</comment>
<comment type="similarity">
    <text evidence="3 4">Belongs to the cytochrome b family.</text>
</comment>
<comment type="caution">
    <text evidence="2">The full-length protein contains only eight transmembrane helices, not nine as predicted by bioinformatics tools.</text>
</comment>
<organism>
    <name type="scientific">Grus nigricollis</name>
    <name type="common">Black-necked crane</name>
    <dbReference type="NCBI Taxonomy" id="40817"/>
    <lineage>
        <taxon>Eukaryota</taxon>
        <taxon>Metazoa</taxon>
        <taxon>Chordata</taxon>
        <taxon>Craniata</taxon>
        <taxon>Vertebrata</taxon>
        <taxon>Euteleostomi</taxon>
        <taxon>Archelosauria</taxon>
        <taxon>Archosauria</taxon>
        <taxon>Dinosauria</taxon>
        <taxon>Saurischia</taxon>
        <taxon>Theropoda</taxon>
        <taxon>Coelurosauria</taxon>
        <taxon>Aves</taxon>
        <taxon>Neognathae</taxon>
        <taxon>Neoaves</taxon>
        <taxon>Gruiformes</taxon>
        <taxon>Gruidae</taxon>
        <taxon>Grus</taxon>
    </lineage>
</organism>
<name>CYB_GRUNI</name>
<feature type="chain" id="PRO_0000061014" description="Cytochrome b">
    <location>
        <begin position="1"/>
        <end position="380"/>
    </location>
</feature>
<feature type="transmembrane region" description="Helical" evidence="2">
    <location>
        <begin position="34"/>
        <end position="54"/>
    </location>
</feature>
<feature type="transmembrane region" description="Helical" evidence="2">
    <location>
        <begin position="78"/>
        <end position="99"/>
    </location>
</feature>
<feature type="transmembrane region" description="Helical" evidence="2">
    <location>
        <begin position="114"/>
        <end position="134"/>
    </location>
</feature>
<feature type="transmembrane region" description="Helical" evidence="2">
    <location>
        <begin position="179"/>
        <end position="199"/>
    </location>
</feature>
<feature type="transmembrane region" description="Helical" evidence="2">
    <location>
        <begin position="227"/>
        <end position="247"/>
    </location>
</feature>
<feature type="transmembrane region" description="Helical" evidence="2">
    <location>
        <begin position="289"/>
        <end position="309"/>
    </location>
</feature>
<feature type="transmembrane region" description="Helical" evidence="2">
    <location>
        <begin position="321"/>
        <end position="341"/>
    </location>
</feature>
<feature type="transmembrane region" description="Helical" evidence="2">
    <location>
        <begin position="348"/>
        <end position="368"/>
    </location>
</feature>
<feature type="binding site" description="axial binding residue" evidence="2">
    <location>
        <position position="84"/>
    </location>
    <ligand>
        <name>heme b</name>
        <dbReference type="ChEBI" id="CHEBI:60344"/>
        <label>b562</label>
    </ligand>
    <ligandPart>
        <name>Fe</name>
        <dbReference type="ChEBI" id="CHEBI:18248"/>
    </ligandPart>
</feature>
<feature type="binding site" description="axial binding residue" evidence="2">
    <location>
        <position position="98"/>
    </location>
    <ligand>
        <name>heme b</name>
        <dbReference type="ChEBI" id="CHEBI:60344"/>
        <label>b566</label>
    </ligand>
    <ligandPart>
        <name>Fe</name>
        <dbReference type="ChEBI" id="CHEBI:18248"/>
    </ligandPart>
</feature>
<feature type="binding site" description="axial binding residue" evidence="2">
    <location>
        <position position="183"/>
    </location>
    <ligand>
        <name>heme b</name>
        <dbReference type="ChEBI" id="CHEBI:60344"/>
        <label>b562</label>
    </ligand>
    <ligandPart>
        <name>Fe</name>
        <dbReference type="ChEBI" id="CHEBI:18248"/>
    </ligandPart>
</feature>
<feature type="binding site" description="axial binding residue" evidence="2">
    <location>
        <position position="197"/>
    </location>
    <ligand>
        <name>heme b</name>
        <dbReference type="ChEBI" id="CHEBI:60344"/>
        <label>b566</label>
    </ligand>
    <ligandPart>
        <name>Fe</name>
        <dbReference type="ChEBI" id="CHEBI:18248"/>
    </ligandPart>
</feature>
<feature type="binding site" evidence="2">
    <location>
        <position position="202"/>
    </location>
    <ligand>
        <name>a ubiquinone</name>
        <dbReference type="ChEBI" id="CHEBI:16389"/>
    </ligand>
</feature>
<geneLocation type="mitochondrion"/>
<keyword id="KW-0249">Electron transport</keyword>
<keyword id="KW-0349">Heme</keyword>
<keyword id="KW-0408">Iron</keyword>
<keyword id="KW-0472">Membrane</keyword>
<keyword id="KW-0479">Metal-binding</keyword>
<keyword id="KW-0496">Mitochondrion</keyword>
<keyword id="KW-0999">Mitochondrion inner membrane</keyword>
<keyword id="KW-0679">Respiratory chain</keyword>
<keyword id="KW-0812">Transmembrane</keyword>
<keyword id="KW-1133">Transmembrane helix</keyword>
<keyword id="KW-0813">Transport</keyword>
<keyword id="KW-0830">Ubiquinone</keyword>
<protein>
    <recommendedName>
        <fullName>Cytochrome b</fullName>
    </recommendedName>
    <alternativeName>
        <fullName>Complex III subunit 3</fullName>
    </alternativeName>
    <alternativeName>
        <fullName>Complex III subunit III</fullName>
    </alternativeName>
    <alternativeName>
        <fullName>Cytochrome b-c1 complex subunit 3</fullName>
    </alternativeName>
    <alternativeName>
        <fullName>Ubiquinol-cytochrome-c reductase complex cytochrome b subunit</fullName>
    </alternativeName>
</protein>
<evidence type="ECO:0000250" key="1"/>
<evidence type="ECO:0000250" key="2">
    <source>
        <dbReference type="UniProtKB" id="P00157"/>
    </source>
</evidence>
<evidence type="ECO:0000255" key="3">
    <source>
        <dbReference type="PROSITE-ProRule" id="PRU00967"/>
    </source>
</evidence>
<evidence type="ECO:0000255" key="4">
    <source>
        <dbReference type="PROSITE-ProRule" id="PRU00968"/>
    </source>
</evidence>
<sequence>MAPNLRKSHPLLKMINNSLIDLPTPSNISAWWNFGSLLGICLATQILTGLLLAAHYTADTTLAFSSVAHTCRNVQYGWLIRNLHANGASFFFICIYLHIGRGLYYGSYLYKETWNTGVILLLTLMATAFVGYVLPWGQMSFWGATVITNLFSAVPYIGQTLVEWAWGGFSVDNPTLTRFFTLHFLLPFMIMGLTLIHLTFLHESGSNNPLGIVSNCDKIPFHPYFSLKDTLGFMFMLLPLMTLALFSPNLLGDPENFTPANPLVTPPHIKPEWYFLFAYAILRSIPNKLGGVLALAASVLILFLAPLLHKSKQRTMTFRPLFQLLFWTLTANLLILTWVGSQPVEHPFIIIGQLASLTYFTILLILFPIIGALENKMLNY</sequence>